<name>Y383_MYCPN</name>
<accession>P75399</accession>
<proteinExistence type="inferred from homology"/>
<evidence type="ECO:0000250" key="1"/>
<evidence type="ECO:0000305" key="2"/>
<reference key="1">
    <citation type="journal article" date="1996" name="Nucleic Acids Res.">
        <title>Complete sequence analysis of the genome of the bacterium Mycoplasma pneumoniae.</title>
        <authorList>
            <person name="Himmelreich R."/>
            <person name="Hilbert H."/>
            <person name="Plagens H."/>
            <person name="Pirkl E."/>
            <person name="Li B.-C."/>
            <person name="Herrmann R."/>
        </authorList>
    </citation>
    <scope>NUCLEOTIDE SEQUENCE [LARGE SCALE GENOMIC DNA]</scope>
    <source>
        <strain>ATCC 29342 / M129 / Subtype 1</strain>
    </source>
</reference>
<dbReference type="EC" id="3.1.3.-"/>
<dbReference type="EMBL" id="U00089">
    <property type="protein sequence ID" value="AAB96102.1"/>
    <property type="molecule type" value="Genomic_DNA"/>
</dbReference>
<dbReference type="PIR" id="S73780">
    <property type="entry name" value="S73780"/>
</dbReference>
<dbReference type="RefSeq" id="NP_110071.1">
    <property type="nucleotide sequence ID" value="NC_000912.1"/>
</dbReference>
<dbReference type="RefSeq" id="WP_010874739.1">
    <property type="nucleotide sequence ID" value="NZ_OU342337.1"/>
</dbReference>
<dbReference type="SMR" id="P75399"/>
<dbReference type="IntAct" id="P75399">
    <property type="interactions" value="3"/>
</dbReference>
<dbReference type="STRING" id="272634.MPN_383"/>
<dbReference type="EnsemblBacteria" id="AAB96102">
    <property type="protein sequence ID" value="AAB96102"/>
    <property type="gene ID" value="MPN_383"/>
</dbReference>
<dbReference type="KEGG" id="mpn:MPN_383"/>
<dbReference type="PATRIC" id="fig|272634.6.peg.414"/>
<dbReference type="HOGENOM" id="CLU_044146_0_3_14"/>
<dbReference type="OrthoDB" id="388395at2"/>
<dbReference type="BioCyc" id="MPNE272634:G1GJ3-606-MONOMER"/>
<dbReference type="Proteomes" id="UP000000808">
    <property type="component" value="Chromosome"/>
</dbReference>
<dbReference type="GO" id="GO:0005829">
    <property type="term" value="C:cytosol"/>
    <property type="evidence" value="ECO:0007669"/>
    <property type="project" value="TreeGrafter"/>
</dbReference>
<dbReference type="GO" id="GO:0000287">
    <property type="term" value="F:magnesium ion binding"/>
    <property type="evidence" value="ECO:0007669"/>
    <property type="project" value="TreeGrafter"/>
</dbReference>
<dbReference type="GO" id="GO:0016791">
    <property type="term" value="F:phosphatase activity"/>
    <property type="evidence" value="ECO:0007669"/>
    <property type="project" value="UniProtKB-ARBA"/>
</dbReference>
<dbReference type="CDD" id="cd07516">
    <property type="entry name" value="HAD_Pase"/>
    <property type="match status" value="1"/>
</dbReference>
<dbReference type="Gene3D" id="3.30.1240.10">
    <property type="match status" value="1"/>
</dbReference>
<dbReference type="Gene3D" id="3.40.50.1000">
    <property type="entry name" value="HAD superfamily/HAD-like"/>
    <property type="match status" value="1"/>
</dbReference>
<dbReference type="InterPro" id="IPR000150">
    <property type="entry name" value="Cof"/>
</dbReference>
<dbReference type="InterPro" id="IPR036412">
    <property type="entry name" value="HAD-like_sf"/>
</dbReference>
<dbReference type="InterPro" id="IPR006379">
    <property type="entry name" value="HAD-SF_hydro_IIB"/>
</dbReference>
<dbReference type="InterPro" id="IPR023214">
    <property type="entry name" value="HAD_sf"/>
</dbReference>
<dbReference type="NCBIfam" id="TIGR00099">
    <property type="entry name" value="Cof-subfamily"/>
    <property type="match status" value="1"/>
</dbReference>
<dbReference type="NCBIfam" id="TIGR01484">
    <property type="entry name" value="HAD-SF-IIB"/>
    <property type="match status" value="2"/>
</dbReference>
<dbReference type="PANTHER" id="PTHR10000:SF8">
    <property type="entry name" value="HAD SUPERFAMILY HYDROLASE-LIKE, TYPE 3"/>
    <property type="match status" value="1"/>
</dbReference>
<dbReference type="PANTHER" id="PTHR10000">
    <property type="entry name" value="PHOSPHOSERINE PHOSPHATASE"/>
    <property type="match status" value="1"/>
</dbReference>
<dbReference type="Pfam" id="PF08282">
    <property type="entry name" value="Hydrolase_3"/>
    <property type="match status" value="1"/>
</dbReference>
<dbReference type="SFLD" id="SFLDG01140">
    <property type="entry name" value="C2.B:_Phosphomannomutase_and_P"/>
    <property type="match status" value="1"/>
</dbReference>
<dbReference type="SFLD" id="SFLDS00003">
    <property type="entry name" value="Haloacid_Dehalogenase"/>
    <property type="match status" value="1"/>
</dbReference>
<dbReference type="SUPFAM" id="SSF56784">
    <property type="entry name" value="HAD-like"/>
    <property type="match status" value="1"/>
</dbReference>
<dbReference type="PROSITE" id="PS01228">
    <property type="entry name" value="COF_1"/>
    <property type="match status" value="1"/>
</dbReference>
<dbReference type="PROSITE" id="PS01229">
    <property type="entry name" value="COF_2"/>
    <property type="match status" value="1"/>
</dbReference>
<feature type="chain" id="PRO_0000054440" description="Putative phosphatase MPN_383">
    <location>
        <begin position="1"/>
        <end position="282"/>
    </location>
</feature>
<feature type="active site" description="Nucleophile" evidence="1">
    <location>
        <position position="11"/>
    </location>
</feature>
<feature type="binding site" evidence="1">
    <location>
        <position position="11"/>
    </location>
    <ligand>
        <name>Mg(2+)</name>
        <dbReference type="ChEBI" id="CHEBI:18420"/>
    </ligand>
</feature>
<feature type="binding site" evidence="1">
    <location>
        <position position="12"/>
    </location>
    <ligand>
        <name>phosphate</name>
        <dbReference type="ChEBI" id="CHEBI:43474"/>
    </ligand>
</feature>
<feature type="binding site" evidence="1">
    <location>
        <position position="13"/>
    </location>
    <ligand>
        <name>Mg(2+)</name>
        <dbReference type="ChEBI" id="CHEBI:18420"/>
    </ligand>
</feature>
<feature type="binding site" evidence="1">
    <location>
        <begin position="45"/>
        <end position="46"/>
    </location>
    <ligand>
        <name>phosphate</name>
        <dbReference type="ChEBI" id="CHEBI:43474"/>
    </ligand>
</feature>
<feature type="binding site" evidence="1">
    <location>
        <position position="207"/>
    </location>
    <ligand>
        <name>phosphate</name>
        <dbReference type="ChEBI" id="CHEBI:43474"/>
    </ligand>
</feature>
<feature type="binding site" evidence="1">
    <location>
        <position position="230"/>
    </location>
    <ligand>
        <name>Mg(2+)</name>
        <dbReference type="ChEBI" id="CHEBI:18420"/>
    </ligand>
</feature>
<feature type="binding site" evidence="1">
    <location>
        <position position="233"/>
    </location>
    <ligand>
        <name>phosphate</name>
        <dbReference type="ChEBI" id="CHEBI:43474"/>
    </ligand>
</feature>
<keyword id="KW-0378">Hydrolase</keyword>
<keyword id="KW-0460">Magnesium</keyword>
<keyword id="KW-0479">Metal-binding</keyword>
<keyword id="KW-1185">Reference proteome</keyword>
<sequence>MKPKVQNLIFDLDGTLLSWGHEPLPQTVTFLKELQKQGFKITFATGRSHILIRNTTQFIQPDLPVISSNGALIYDFAREKALHMTQLAPQSVVPIMRLLLQLEESFCIYTDKKVFGFEKPGIPCKRLRTTQSKIVEPDITQNNFTINPLTDASKFDFATQNITKILLITEDRGRISKITKHLDAIENISYVSSMTFALDIMHKDVNKAYGLKALEQQTGLDPQMTMVFGDGDNDVEIFNAVKYSVAMANGSDLAKQNATFISEFDNDHDGIYHFLQCFLKIE</sequence>
<gene>
    <name type="ordered locus">MPN_383</name>
    <name type="ORF">A19_orf282</name>
    <name type="ORF">MP454</name>
</gene>
<organism>
    <name type="scientific">Mycoplasma pneumoniae (strain ATCC 29342 / M129 / Subtype 1)</name>
    <name type="common">Mycoplasmoides pneumoniae</name>
    <dbReference type="NCBI Taxonomy" id="272634"/>
    <lineage>
        <taxon>Bacteria</taxon>
        <taxon>Bacillati</taxon>
        <taxon>Mycoplasmatota</taxon>
        <taxon>Mycoplasmoidales</taxon>
        <taxon>Mycoplasmoidaceae</taxon>
        <taxon>Mycoplasmoides</taxon>
    </lineage>
</organism>
<comment type="cofactor">
    <cofactor evidence="1">
        <name>Mg(2+)</name>
        <dbReference type="ChEBI" id="CHEBI:18420"/>
    </cofactor>
</comment>
<comment type="similarity">
    <text evidence="2">Belongs to the HAD-like hydrolase superfamily. Cof family.</text>
</comment>
<protein>
    <recommendedName>
        <fullName>Putative phosphatase MPN_383</fullName>
        <ecNumber>3.1.3.-</ecNumber>
    </recommendedName>
</protein>